<reference key="1">
    <citation type="journal article" date="2004" name="Nature">
        <title>Genome sequence of Silicibacter pomeroyi reveals adaptations to the marine environment.</title>
        <authorList>
            <person name="Moran M.A."/>
            <person name="Buchan A."/>
            <person name="Gonzalez J.M."/>
            <person name="Heidelberg J.F."/>
            <person name="Whitman W.B."/>
            <person name="Kiene R.P."/>
            <person name="Henriksen J.R."/>
            <person name="King G.M."/>
            <person name="Belas R."/>
            <person name="Fuqua C."/>
            <person name="Brinkac L.M."/>
            <person name="Lewis M."/>
            <person name="Johri S."/>
            <person name="Weaver B."/>
            <person name="Pai G."/>
            <person name="Eisen J.A."/>
            <person name="Rahe E."/>
            <person name="Sheldon W.M."/>
            <person name="Ye W."/>
            <person name="Miller T.R."/>
            <person name="Carlton J."/>
            <person name="Rasko D.A."/>
            <person name="Paulsen I.T."/>
            <person name="Ren Q."/>
            <person name="Daugherty S.C."/>
            <person name="DeBoy R.T."/>
            <person name="Dodson R.J."/>
            <person name="Durkin A.S."/>
            <person name="Madupu R."/>
            <person name="Nelson W.C."/>
            <person name="Sullivan S.A."/>
            <person name="Rosovitz M.J."/>
            <person name="Haft D.H."/>
            <person name="Selengut J."/>
            <person name="Ward N."/>
        </authorList>
    </citation>
    <scope>NUCLEOTIDE SEQUENCE [LARGE SCALE GENOMIC DNA]</scope>
    <source>
        <strain>ATCC 700808 / DSM 15171 / DSS-3</strain>
    </source>
</reference>
<reference key="2">
    <citation type="journal article" date="2014" name="Stand. Genomic Sci.">
        <title>An updated genome annotation for the model marine bacterium Ruegeria pomeroyi DSS-3.</title>
        <authorList>
            <person name="Rivers A.R."/>
            <person name="Smith C.B."/>
            <person name="Moran M.A."/>
        </authorList>
    </citation>
    <scope>GENOME REANNOTATION</scope>
    <source>
        <strain>ATCC 700808 / DSM 15171 / DSS-3</strain>
    </source>
</reference>
<organism>
    <name type="scientific">Ruegeria pomeroyi (strain ATCC 700808 / DSM 15171 / DSS-3)</name>
    <name type="common">Silicibacter pomeroyi</name>
    <dbReference type="NCBI Taxonomy" id="246200"/>
    <lineage>
        <taxon>Bacteria</taxon>
        <taxon>Pseudomonadati</taxon>
        <taxon>Pseudomonadota</taxon>
        <taxon>Alphaproteobacteria</taxon>
        <taxon>Rhodobacterales</taxon>
        <taxon>Roseobacteraceae</taxon>
        <taxon>Ruegeria</taxon>
    </lineage>
</organism>
<proteinExistence type="inferred from homology"/>
<dbReference type="EC" id="7.3.2.1" evidence="1"/>
<dbReference type="EMBL" id="CP000031">
    <property type="protein sequence ID" value="AAV95227.1"/>
    <property type="status" value="ALT_INIT"/>
    <property type="molecule type" value="Genomic_DNA"/>
</dbReference>
<dbReference type="RefSeq" id="WP_044028237.1">
    <property type="nucleotide sequence ID" value="NC_003911.12"/>
</dbReference>
<dbReference type="SMR" id="Q5LS19"/>
<dbReference type="STRING" id="246200.SPO1951"/>
<dbReference type="PaxDb" id="246200-SPO1951"/>
<dbReference type="KEGG" id="sil:SPO1951"/>
<dbReference type="eggNOG" id="COG1117">
    <property type="taxonomic scope" value="Bacteria"/>
</dbReference>
<dbReference type="HOGENOM" id="CLU_000604_1_22_5"/>
<dbReference type="OrthoDB" id="9802264at2"/>
<dbReference type="Proteomes" id="UP000001023">
    <property type="component" value="Chromosome"/>
</dbReference>
<dbReference type="GO" id="GO:0005886">
    <property type="term" value="C:plasma membrane"/>
    <property type="evidence" value="ECO:0007669"/>
    <property type="project" value="UniProtKB-SubCell"/>
</dbReference>
<dbReference type="GO" id="GO:0005524">
    <property type="term" value="F:ATP binding"/>
    <property type="evidence" value="ECO:0007669"/>
    <property type="project" value="UniProtKB-KW"/>
</dbReference>
<dbReference type="GO" id="GO:0016887">
    <property type="term" value="F:ATP hydrolysis activity"/>
    <property type="evidence" value="ECO:0007669"/>
    <property type="project" value="InterPro"/>
</dbReference>
<dbReference type="GO" id="GO:0015415">
    <property type="term" value="F:ATPase-coupled phosphate ion transmembrane transporter activity"/>
    <property type="evidence" value="ECO:0007669"/>
    <property type="project" value="UniProtKB-EC"/>
</dbReference>
<dbReference type="GO" id="GO:0035435">
    <property type="term" value="P:phosphate ion transmembrane transport"/>
    <property type="evidence" value="ECO:0007669"/>
    <property type="project" value="InterPro"/>
</dbReference>
<dbReference type="CDD" id="cd03260">
    <property type="entry name" value="ABC_PstB_phosphate_transporter"/>
    <property type="match status" value="1"/>
</dbReference>
<dbReference type="FunFam" id="3.40.50.300:FF:000132">
    <property type="entry name" value="Phosphate import ATP-binding protein PstB"/>
    <property type="match status" value="1"/>
</dbReference>
<dbReference type="Gene3D" id="3.40.50.300">
    <property type="entry name" value="P-loop containing nucleotide triphosphate hydrolases"/>
    <property type="match status" value="1"/>
</dbReference>
<dbReference type="InterPro" id="IPR003593">
    <property type="entry name" value="AAA+_ATPase"/>
</dbReference>
<dbReference type="InterPro" id="IPR003439">
    <property type="entry name" value="ABC_transporter-like_ATP-bd"/>
</dbReference>
<dbReference type="InterPro" id="IPR017871">
    <property type="entry name" value="ABC_transporter-like_CS"/>
</dbReference>
<dbReference type="InterPro" id="IPR027417">
    <property type="entry name" value="P-loop_NTPase"/>
</dbReference>
<dbReference type="InterPro" id="IPR005670">
    <property type="entry name" value="PstB-like"/>
</dbReference>
<dbReference type="NCBIfam" id="TIGR00972">
    <property type="entry name" value="3a0107s01c2"/>
    <property type="match status" value="1"/>
</dbReference>
<dbReference type="PANTHER" id="PTHR43423">
    <property type="entry name" value="ABC TRANSPORTER I FAMILY MEMBER 17"/>
    <property type="match status" value="1"/>
</dbReference>
<dbReference type="PANTHER" id="PTHR43423:SF1">
    <property type="entry name" value="ABC TRANSPORTER I FAMILY MEMBER 17"/>
    <property type="match status" value="1"/>
</dbReference>
<dbReference type="Pfam" id="PF00005">
    <property type="entry name" value="ABC_tran"/>
    <property type="match status" value="1"/>
</dbReference>
<dbReference type="SMART" id="SM00382">
    <property type="entry name" value="AAA"/>
    <property type="match status" value="1"/>
</dbReference>
<dbReference type="SUPFAM" id="SSF52540">
    <property type="entry name" value="P-loop containing nucleoside triphosphate hydrolases"/>
    <property type="match status" value="1"/>
</dbReference>
<dbReference type="PROSITE" id="PS00211">
    <property type="entry name" value="ABC_TRANSPORTER_1"/>
    <property type="match status" value="1"/>
</dbReference>
<dbReference type="PROSITE" id="PS50893">
    <property type="entry name" value="ABC_TRANSPORTER_2"/>
    <property type="match status" value="1"/>
</dbReference>
<dbReference type="PROSITE" id="PS51238">
    <property type="entry name" value="PSTB"/>
    <property type="match status" value="1"/>
</dbReference>
<comment type="function">
    <text evidence="1">Part of the ABC transporter complex PstSACB involved in phosphate import. Responsible for energy coupling to the transport system.</text>
</comment>
<comment type="catalytic activity">
    <reaction evidence="1">
        <text>phosphate(out) + ATP + H2O = ADP + 2 phosphate(in) + H(+)</text>
        <dbReference type="Rhea" id="RHEA:24440"/>
        <dbReference type="ChEBI" id="CHEBI:15377"/>
        <dbReference type="ChEBI" id="CHEBI:15378"/>
        <dbReference type="ChEBI" id="CHEBI:30616"/>
        <dbReference type="ChEBI" id="CHEBI:43474"/>
        <dbReference type="ChEBI" id="CHEBI:456216"/>
        <dbReference type="EC" id="7.3.2.1"/>
    </reaction>
</comment>
<comment type="subunit">
    <text evidence="1">The complex is composed of two ATP-binding proteins (PstB), two transmembrane proteins (PstC and PstA) and a solute-binding protein (PstS).</text>
</comment>
<comment type="subcellular location">
    <subcellularLocation>
        <location evidence="1">Cell inner membrane</location>
        <topology evidence="1">Peripheral membrane protein</topology>
    </subcellularLocation>
</comment>
<comment type="similarity">
    <text evidence="1">Belongs to the ABC transporter superfamily. Phosphate importer (TC 3.A.1.7) family.</text>
</comment>
<comment type="sequence caution" evidence="2">
    <conflict type="erroneous initiation">
        <sequence resource="EMBL-CDS" id="AAV95227"/>
    </conflict>
</comment>
<gene>
    <name evidence="1" type="primary">pstB</name>
    <name type="ordered locus">SPO1951</name>
</gene>
<sequence>MNDMSRVERAVESKQTKMECRDCHVYYGDTHAIKNVNVDIADKTVTAFIGPSGCGKSTFLRCLNRMNDTIAGARVQGSFQLDGEDIYDKRVDPVQLRAKVGMVFQKPNPFPKSIYDNVAYGPRIHGLARNRAEMDEIVEKALRRGAIWDEVKDRLDAPGTGLSGGQQQRLCIARAIATEPEVLLMDEPCSALDPIATAQVEELIDELRQNYSVVIVTHSMQQAARVSQKTAFFHLGQLVEYGETGQIFTNPEDPRTESYITGRIG</sequence>
<protein>
    <recommendedName>
        <fullName evidence="1">Phosphate import ATP-binding protein PstB</fullName>
        <ecNumber evidence="1">7.3.2.1</ecNumber>
    </recommendedName>
    <alternativeName>
        <fullName evidence="1">ABC phosphate transporter</fullName>
    </alternativeName>
    <alternativeName>
        <fullName evidence="1">Phosphate-transporting ATPase</fullName>
    </alternativeName>
</protein>
<keyword id="KW-0067">ATP-binding</keyword>
<keyword id="KW-0997">Cell inner membrane</keyword>
<keyword id="KW-1003">Cell membrane</keyword>
<keyword id="KW-0472">Membrane</keyword>
<keyword id="KW-0547">Nucleotide-binding</keyword>
<keyword id="KW-0592">Phosphate transport</keyword>
<keyword id="KW-1185">Reference proteome</keyword>
<keyword id="KW-1278">Translocase</keyword>
<keyword id="KW-0813">Transport</keyword>
<name>PSTB_RUEPO</name>
<evidence type="ECO:0000255" key="1">
    <source>
        <dbReference type="HAMAP-Rule" id="MF_01702"/>
    </source>
</evidence>
<evidence type="ECO:0000305" key="2"/>
<feature type="chain" id="PRO_0000272530" description="Phosphate import ATP-binding protein PstB">
    <location>
        <begin position="1"/>
        <end position="265"/>
    </location>
</feature>
<feature type="domain" description="ABC transporter" evidence="1">
    <location>
        <begin position="18"/>
        <end position="260"/>
    </location>
</feature>
<feature type="binding site" evidence="1">
    <location>
        <begin position="50"/>
        <end position="57"/>
    </location>
    <ligand>
        <name>ATP</name>
        <dbReference type="ChEBI" id="CHEBI:30616"/>
    </ligand>
</feature>
<accession>Q5LS19</accession>